<protein>
    <recommendedName>
        <fullName evidence="1">Acetyl-coenzyme A carboxylase carboxyl transferase subunit beta</fullName>
        <shortName evidence="1">ACCase subunit beta</shortName>
        <shortName evidence="1">Acetyl-CoA carboxylase carboxyltransferase subunit beta</shortName>
        <ecNumber evidence="1">2.1.3.15</ecNumber>
    </recommendedName>
</protein>
<reference key="1">
    <citation type="submission" date="2008-06" db="EMBL/GenBank/DDBJ databases">
        <title>Lactobacillus casei BL23 complete genome sequence.</title>
        <authorList>
            <person name="Maze A."/>
            <person name="Boel G."/>
            <person name="Bourand A."/>
            <person name="Loux V."/>
            <person name="Gibrat J.F."/>
            <person name="Zuniga M."/>
            <person name="Hartke A."/>
            <person name="Deutscher J."/>
        </authorList>
    </citation>
    <scope>NUCLEOTIDE SEQUENCE [LARGE SCALE GENOMIC DNA]</scope>
    <source>
        <strain>BL23</strain>
    </source>
</reference>
<comment type="function">
    <text evidence="1">Component of the acetyl coenzyme A carboxylase (ACC) complex. Biotin carboxylase (BC) catalyzes the carboxylation of biotin on its carrier protein (BCCP) and then the CO(2) group is transferred by the transcarboxylase to acetyl-CoA to form malonyl-CoA.</text>
</comment>
<comment type="catalytic activity">
    <reaction evidence="1">
        <text>N(6)-carboxybiotinyl-L-lysyl-[protein] + acetyl-CoA = N(6)-biotinyl-L-lysyl-[protein] + malonyl-CoA</text>
        <dbReference type="Rhea" id="RHEA:54728"/>
        <dbReference type="Rhea" id="RHEA-COMP:10505"/>
        <dbReference type="Rhea" id="RHEA-COMP:10506"/>
        <dbReference type="ChEBI" id="CHEBI:57288"/>
        <dbReference type="ChEBI" id="CHEBI:57384"/>
        <dbReference type="ChEBI" id="CHEBI:83144"/>
        <dbReference type="ChEBI" id="CHEBI:83145"/>
        <dbReference type="EC" id="2.1.3.15"/>
    </reaction>
</comment>
<comment type="cofactor">
    <cofactor evidence="1">
        <name>Zn(2+)</name>
        <dbReference type="ChEBI" id="CHEBI:29105"/>
    </cofactor>
    <text evidence="1">Binds 1 zinc ion per subunit.</text>
</comment>
<comment type="pathway">
    <text evidence="1">Lipid metabolism; malonyl-CoA biosynthesis; malonyl-CoA from acetyl-CoA: step 1/1.</text>
</comment>
<comment type="subunit">
    <text evidence="1">Acetyl-CoA carboxylase is a heterohexamer composed of biotin carboxyl carrier protein (AccB), biotin carboxylase (AccC) and two subunits each of ACCase subunit alpha (AccA) and ACCase subunit beta (AccD).</text>
</comment>
<comment type="subcellular location">
    <subcellularLocation>
        <location evidence="1">Cytoplasm</location>
    </subcellularLocation>
</comment>
<comment type="similarity">
    <text evidence="1">Belongs to the AccD/PCCB family.</text>
</comment>
<gene>
    <name evidence="1" type="primary">accD</name>
    <name type="ordered locus">LCABL_22910</name>
</gene>
<proteinExistence type="inferred from homology"/>
<organism>
    <name type="scientific">Lacticaseibacillus casei (strain BL23)</name>
    <name type="common">Lactobacillus casei</name>
    <dbReference type="NCBI Taxonomy" id="543734"/>
    <lineage>
        <taxon>Bacteria</taxon>
        <taxon>Bacillati</taxon>
        <taxon>Bacillota</taxon>
        <taxon>Bacilli</taxon>
        <taxon>Lactobacillales</taxon>
        <taxon>Lactobacillaceae</taxon>
        <taxon>Lacticaseibacillus</taxon>
    </lineage>
</organism>
<keyword id="KW-0067">ATP-binding</keyword>
<keyword id="KW-0963">Cytoplasm</keyword>
<keyword id="KW-0275">Fatty acid biosynthesis</keyword>
<keyword id="KW-0276">Fatty acid metabolism</keyword>
<keyword id="KW-0444">Lipid biosynthesis</keyword>
<keyword id="KW-0443">Lipid metabolism</keyword>
<keyword id="KW-0479">Metal-binding</keyword>
<keyword id="KW-0547">Nucleotide-binding</keyword>
<keyword id="KW-0808">Transferase</keyword>
<keyword id="KW-0862">Zinc</keyword>
<keyword id="KW-0863">Zinc-finger</keyword>
<accession>B3W9I9</accession>
<feature type="chain" id="PRO_0000389762" description="Acetyl-coenzyme A carboxylase carboxyl transferase subunit beta">
    <location>
        <begin position="1"/>
        <end position="271"/>
    </location>
</feature>
<feature type="domain" description="CoA carboxyltransferase N-terminal" evidence="2">
    <location>
        <begin position="21"/>
        <end position="271"/>
    </location>
</feature>
<feature type="zinc finger region" description="C4-type" evidence="1">
    <location>
        <begin position="25"/>
        <end position="46"/>
    </location>
</feature>
<feature type="binding site" evidence="1">
    <location>
        <position position="25"/>
    </location>
    <ligand>
        <name>Zn(2+)</name>
        <dbReference type="ChEBI" id="CHEBI:29105"/>
    </ligand>
</feature>
<feature type="binding site" evidence="1">
    <location>
        <position position="28"/>
    </location>
    <ligand>
        <name>Zn(2+)</name>
        <dbReference type="ChEBI" id="CHEBI:29105"/>
    </ligand>
</feature>
<feature type="binding site" evidence="1">
    <location>
        <position position="43"/>
    </location>
    <ligand>
        <name>Zn(2+)</name>
        <dbReference type="ChEBI" id="CHEBI:29105"/>
    </ligand>
</feature>
<feature type="binding site" evidence="1">
    <location>
        <position position="46"/>
    </location>
    <ligand>
        <name>Zn(2+)</name>
        <dbReference type="ChEBI" id="CHEBI:29105"/>
    </ligand>
</feature>
<dbReference type="EC" id="2.1.3.15" evidence="1"/>
<dbReference type="EMBL" id="FM177140">
    <property type="protein sequence ID" value="CAQ67358.1"/>
    <property type="molecule type" value="Genomic_DNA"/>
</dbReference>
<dbReference type="SMR" id="B3W9I9"/>
<dbReference type="KEGG" id="lcb:LCABL_22910"/>
<dbReference type="HOGENOM" id="CLU_015486_1_1_9"/>
<dbReference type="UniPathway" id="UPA00655">
    <property type="reaction ID" value="UER00711"/>
</dbReference>
<dbReference type="GO" id="GO:0009317">
    <property type="term" value="C:acetyl-CoA carboxylase complex"/>
    <property type="evidence" value="ECO:0007669"/>
    <property type="project" value="InterPro"/>
</dbReference>
<dbReference type="GO" id="GO:0003989">
    <property type="term" value="F:acetyl-CoA carboxylase activity"/>
    <property type="evidence" value="ECO:0007669"/>
    <property type="project" value="InterPro"/>
</dbReference>
<dbReference type="GO" id="GO:0005524">
    <property type="term" value="F:ATP binding"/>
    <property type="evidence" value="ECO:0007669"/>
    <property type="project" value="UniProtKB-KW"/>
</dbReference>
<dbReference type="GO" id="GO:0016743">
    <property type="term" value="F:carboxyl- or carbamoyltransferase activity"/>
    <property type="evidence" value="ECO:0007669"/>
    <property type="project" value="UniProtKB-UniRule"/>
</dbReference>
<dbReference type="GO" id="GO:0008270">
    <property type="term" value="F:zinc ion binding"/>
    <property type="evidence" value="ECO:0007669"/>
    <property type="project" value="UniProtKB-UniRule"/>
</dbReference>
<dbReference type="GO" id="GO:0006633">
    <property type="term" value="P:fatty acid biosynthetic process"/>
    <property type="evidence" value="ECO:0007669"/>
    <property type="project" value="UniProtKB-KW"/>
</dbReference>
<dbReference type="GO" id="GO:2001295">
    <property type="term" value="P:malonyl-CoA biosynthetic process"/>
    <property type="evidence" value="ECO:0007669"/>
    <property type="project" value="UniProtKB-UniRule"/>
</dbReference>
<dbReference type="Gene3D" id="3.90.226.10">
    <property type="entry name" value="2-enoyl-CoA Hydratase, Chain A, domain 1"/>
    <property type="match status" value="1"/>
</dbReference>
<dbReference type="HAMAP" id="MF_01395">
    <property type="entry name" value="AcetylCoA_CT_beta"/>
    <property type="match status" value="1"/>
</dbReference>
<dbReference type="InterPro" id="IPR034733">
    <property type="entry name" value="AcCoA_carboxyl_beta"/>
</dbReference>
<dbReference type="InterPro" id="IPR000438">
    <property type="entry name" value="Acetyl_CoA_COase_Trfase_b_su"/>
</dbReference>
<dbReference type="InterPro" id="IPR029045">
    <property type="entry name" value="ClpP/crotonase-like_dom_sf"/>
</dbReference>
<dbReference type="InterPro" id="IPR011762">
    <property type="entry name" value="COA_CT_N"/>
</dbReference>
<dbReference type="NCBIfam" id="TIGR00515">
    <property type="entry name" value="accD"/>
    <property type="match status" value="1"/>
</dbReference>
<dbReference type="PANTHER" id="PTHR42995">
    <property type="entry name" value="ACETYL-COENZYME A CARBOXYLASE CARBOXYL TRANSFERASE SUBUNIT BETA, CHLOROPLASTIC"/>
    <property type="match status" value="1"/>
</dbReference>
<dbReference type="PANTHER" id="PTHR42995:SF5">
    <property type="entry name" value="ACETYL-COENZYME A CARBOXYLASE CARBOXYL TRANSFERASE SUBUNIT BETA, CHLOROPLASTIC"/>
    <property type="match status" value="1"/>
</dbReference>
<dbReference type="Pfam" id="PF01039">
    <property type="entry name" value="Carboxyl_trans"/>
    <property type="match status" value="1"/>
</dbReference>
<dbReference type="PRINTS" id="PR01070">
    <property type="entry name" value="ACCCTRFRASEB"/>
</dbReference>
<dbReference type="SUPFAM" id="SSF52096">
    <property type="entry name" value="ClpP/crotonase"/>
    <property type="match status" value="1"/>
</dbReference>
<dbReference type="PROSITE" id="PS50980">
    <property type="entry name" value="COA_CT_NTER"/>
    <property type="match status" value="1"/>
</dbReference>
<name>ACCD_LACCB</name>
<sequence>MSQPQLTQEALAREAALPENLWIQCPYCKQGSYRESLGNAQVCPHCHYGFRITAKKRLSLIATATEEWDADLVTADPLDFPGYTEKLAAGQAATGLKDSVWTGQATIGGQSCALGIMDPKFMMGSLGTVTGERLTRLFEKATSANLAVVLFCASGGARMQEGIHSLMQMAKVSAAVKAHSNAGLLFISVLTDPTMGGVTASFAMQGDITLAEPHSLIGFAGRRVIEQTINQKLPQNFQRAETLLQSGFIDAVVQRQDQPSYLGDLLALHTA</sequence>
<evidence type="ECO:0000255" key="1">
    <source>
        <dbReference type="HAMAP-Rule" id="MF_01395"/>
    </source>
</evidence>
<evidence type="ECO:0000255" key="2">
    <source>
        <dbReference type="PROSITE-ProRule" id="PRU01136"/>
    </source>
</evidence>